<organism>
    <name type="scientific">Caldanaerobacter subterraneus subsp. tengcongensis (strain DSM 15242 / JCM 11007 / NBRC 100824 / MB4)</name>
    <name type="common">Thermoanaerobacter tengcongensis</name>
    <dbReference type="NCBI Taxonomy" id="273068"/>
    <lineage>
        <taxon>Bacteria</taxon>
        <taxon>Bacillati</taxon>
        <taxon>Bacillota</taxon>
        <taxon>Clostridia</taxon>
        <taxon>Thermoanaerobacterales</taxon>
        <taxon>Thermoanaerobacteraceae</taxon>
        <taxon>Caldanaerobacter</taxon>
    </lineage>
</organism>
<proteinExistence type="inferred from homology"/>
<dbReference type="EC" id="2.4.1.230" evidence="2"/>
<dbReference type="EMBL" id="AE008691">
    <property type="protein sequence ID" value="AAM24055.1"/>
    <property type="molecule type" value="Genomic_DNA"/>
</dbReference>
<dbReference type="RefSeq" id="WP_011025193.1">
    <property type="nucleotide sequence ID" value="NC_003869.1"/>
</dbReference>
<dbReference type="SMR" id="Q8RBL8"/>
<dbReference type="STRING" id="273068.TTE0798"/>
<dbReference type="CAZy" id="GH65">
    <property type="family name" value="Glycoside Hydrolase Family 65"/>
</dbReference>
<dbReference type="KEGG" id="tte:TTE0798"/>
<dbReference type="eggNOG" id="COG1554">
    <property type="taxonomic scope" value="Bacteria"/>
</dbReference>
<dbReference type="HOGENOM" id="CLU_006285_2_1_9"/>
<dbReference type="OrthoDB" id="9758855at2"/>
<dbReference type="Proteomes" id="UP000000555">
    <property type="component" value="Chromosome"/>
</dbReference>
<dbReference type="GO" id="GO:0030246">
    <property type="term" value="F:carbohydrate binding"/>
    <property type="evidence" value="ECO:0007669"/>
    <property type="project" value="InterPro"/>
</dbReference>
<dbReference type="GO" id="GO:0004553">
    <property type="term" value="F:hydrolase activity, hydrolyzing O-glycosyl compounds"/>
    <property type="evidence" value="ECO:0007669"/>
    <property type="project" value="TreeGrafter"/>
</dbReference>
<dbReference type="GO" id="GO:0033831">
    <property type="term" value="F:kojibiose phosphorylase activity"/>
    <property type="evidence" value="ECO:0007669"/>
    <property type="project" value="UniProtKB-EC"/>
</dbReference>
<dbReference type="GO" id="GO:0005975">
    <property type="term" value="P:carbohydrate metabolic process"/>
    <property type="evidence" value="ECO:0007669"/>
    <property type="project" value="InterPro"/>
</dbReference>
<dbReference type="Gene3D" id="1.50.10.10">
    <property type="match status" value="1"/>
</dbReference>
<dbReference type="Gene3D" id="2.70.98.40">
    <property type="entry name" value="Glycoside hydrolase, family 65, N-terminal domain"/>
    <property type="match status" value="1"/>
</dbReference>
<dbReference type="Gene3D" id="2.60.420.10">
    <property type="entry name" value="Maltose phosphorylase, domain 3"/>
    <property type="match status" value="1"/>
</dbReference>
<dbReference type="InterPro" id="IPR008928">
    <property type="entry name" value="6-hairpin_glycosidase_sf"/>
</dbReference>
<dbReference type="InterPro" id="IPR012341">
    <property type="entry name" value="6hp_glycosidase-like_sf"/>
</dbReference>
<dbReference type="InterPro" id="IPR011013">
    <property type="entry name" value="Gal_mutarotase_sf_dom"/>
</dbReference>
<dbReference type="InterPro" id="IPR005194">
    <property type="entry name" value="Glyco_hydro_65_C"/>
</dbReference>
<dbReference type="InterPro" id="IPR005195">
    <property type="entry name" value="Glyco_hydro_65_M"/>
</dbReference>
<dbReference type="InterPro" id="IPR005196">
    <property type="entry name" value="Glyco_hydro_65_N"/>
</dbReference>
<dbReference type="InterPro" id="IPR037018">
    <property type="entry name" value="Glyco_hydro_65_N_sf"/>
</dbReference>
<dbReference type="InterPro" id="IPR017045">
    <property type="entry name" value="Malt_Pase/Glycosyl_Hdrlase"/>
</dbReference>
<dbReference type="PANTHER" id="PTHR11051">
    <property type="entry name" value="GLYCOSYL HYDROLASE-RELATED"/>
    <property type="match status" value="1"/>
</dbReference>
<dbReference type="PANTHER" id="PTHR11051:SF8">
    <property type="entry name" value="PROTEIN-GLUCOSYLGALACTOSYLHYDROXYLYSINE GLUCOSIDASE"/>
    <property type="match status" value="1"/>
</dbReference>
<dbReference type="Pfam" id="PF03633">
    <property type="entry name" value="Glyco_hydro_65C"/>
    <property type="match status" value="1"/>
</dbReference>
<dbReference type="Pfam" id="PF03632">
    <property type="entry name" value="Glyco_hydro_65m"/>
    <property type="match status" value="1"/>
</dbReference>
<dbReference type="Pfam" id="PF03636">
    <property type="entry name" value="Glyco_hydro_65N"/>
    <property type="match status" value="1"/>
</dbReference>
<dbReference type="PIRSF" id="PIRSF036289">
    <property type="entry name" value="Glycosyl_hydrolase_malt_phosph"/>
    <property type="match status" value="1"/>
</dbReference>
<dbReference type="SUPFAM" id="SSF74650">
    <property type="entry name" value="Galactose mutarotase-like"/>
    <property type="match status" value="1"/>
</dbReference>
<dbReference type="SUPFAM" id="SSF48208">
    <property type="entry name" value="Six-hairpin glycosidases"/>
    <property type="match status" value="1"/>
</dbReference>
<name>KOJP_CALS4</name>
<reference key="1">
    <citation type="journal article" date="2002" name="Genome Res.">
        <title>A complete sequence of the T. tengcongensis genome.</title>
        <authorList>
            <person name="Bao Q."/>
            <person name="Tian Y."/>
            <person name="Li W."/>
            <person name="Xu Z."/>
            <person name="Xuan Z."/>
            <person name="Hu S."/>
            <person name="Dong W."/>
            <person name="Yang J."/>
            <person name="Chen Y."/>
            <person name="Xue Y."/>
            <person name="Xu Y."/>
            <person name="Lai X."/>
            <person name="Huang L."/>
            <person name="Dong X."/>
            <person name="Ma Y."/>
            <person name="Ling L."/>
            <person name="Tan H."/>
            <person name="Chen R."/>
            <person name="Wang J."/>
            <person name="Yu J."/>
            <person name="Yang H."/>
        </authorList>
    </citation>
    <scope>NUCLEOTIDE SEQUENCE [LARGE SCALE GENOMIC DNA]</scope>
    <source>
        <strain>DSM 15242 / JCM 11007 / NBRC 100824 / MB4</strain>
    </source>
</reference>
<evidence type="ECO:0000250" key="1">
    <source>
        <dbReference type="UniProtKB" id="D6XZ22"/>
    </source>
</evidence>
<evidence type="ECO:0000250" key="2">
    <source>
        <dbReference type="UniProtKB" id="Q8L163"/>
    </source>
</evidence>
<evidence type="ECO:0000305" key="3"/>
<sequence length="771" mass="89640">MQVIKKVEELMGDAKWLVFQEEYNNKLNGKYETLFTLTNGYMGIRGTFEEGSEGERPGSFIAGIFNRGEAQVRELVNVQNWMRLKIYIEGEEIRLDRCELLEFQRILDMKKGVLFRKTVVKDDKGRVTKIEGYRFVSRSNRHRSAIRFFITPLNYEGVIGVENLIEGTVLNSATHPKYRVKHLKVVKNESICKSGIYLETATTDENKRIAVGSTLRIYNLEDINRENIAFFRRFIPLGENSAEYLEFKGEREKTVVVDKFAVTYTSRDVEKDLLKNAVENDLFDFVSRGFDEELEKHIAEYDKLWSVADITIEGDEEADIALRFNIFHLMSSVNEKDPWVSIGAKGLHGEGYKGHVFWDTEIFMLPFFIYVYPEAARTLLMYRYNMLDAARRNAALNGYKGAQYPWESADTGMEETPKWGFDYKGNPVRIWTGDLEHHITADVAFAVWEYFRATNDIDFMLNFGAEIILETARFWASRCEYVEELDRYEINNVIGPDEFHEHVNNNAYTNYFAKWNIKKGLEIIGELKENYPDYYYAITHKISLTPEEVEKWKEVEKKIYIPYDKDKKLIEQFEGYFEKKDYVIEKFDENNMPVWPEGVDVTKLGDTQLIKQADVVMLMLLMPEEFDEETKRINYEYYEKRTMHKSSLSPSMYAIMGLKVGDHRNAYQSFIRSAKVDLADNQGNAVEGIHAASCGGTWQVAVFGFGGLEIDREGVLNINPWLPEKWEKLSYKIFWKGSLLEVTVAKEEVSVKKLKGRETVKIKVKGKEMAL</sequence>
<keyword id="KW-0119">Carbohydrate metabolism</keyword>
<keyword id="KW-0328">Glycosyltransferase</keyword>
<keyword id="KW-1185">Reference proteome</keyword>
<keyword id="KW-0808">Transferase</keyword>
<gene>
    <name type="primary">kojP</name>
    <name type="ordered locus">TTE0798</name>
</gene>
<accession>Q8RBL8</accession>
<protein>
    <recommendedName>
        <fullName evidence="2">Kojibiose phosphorylase</fullName>
        <ecNumber evidence="2">2.4.1.230</ecNumber>
    </recommendedName>
</protein>
<comment type="function">
    <text evidence="2">Catalyzes the reversible phosphorolysis of kojibiose into beta-D-glucose 1-phosphate (Glc1P) and D-glucose.</text>
</comment>
<comment type="catalytic activity">
    <reaction evidence="2">
        <text>kojibiose + phosphate = beta-D-glucose 1-phosphate + D-glucose</text>
        <dbReference type="Rhea" id="RHEA:11176"/>
        <dbReference type="ChEBI" id="CHEBI:4167"/>
        <dbReference type="ChEBI" id="CHEBI:43474"/>
        <dbReference type="ChEBI" id="CHEBI:57684"/>
        <dbReference type="ChEBI" id="CHEBI:142460"/>
        <dbReference type="EC" id="2.4.1.230"/>
    </reaction>
</comment>
<comment type="similarity">
    <text evidence="3">Belongs to the glycosyl hydrolase 65 family.</text>
</comment>
<feature type="chain" id="PRO_0000108016" description="Kojibiose phosphorylase">
    <location>
        <begin position="1"/>
        <end position="771"/>
    </location>
</feature>
<feature type="active site" description="Proton donor" evidence="1">
    <location>
        <position position="498"/>
    </location>
</feature>
<feature type="binding site" evidence="1">
    <location>
        <begin position="358"/>
        <end position="359"/>
    </location>
    <ligand>
        <name>substrate</name>
    </ligand>
</feature>
<feature type="binding site" evidence="1">
    <location>
        <begin position="611"/>
        <end position="612"/>
    </location>
    <ligand>
        <name>substrate</name>
    </ligand>
</feature>